<feature type="chain" id="PRO_1000015438" description="Deoxyuridine 5'-triphosphate nucleotidohydrolase">
    <location>
        <begin position="1"/>
        <end position="152"/>
    </location>
</feature>
<feature type="binding site" evidence="1">
    <location>
        <begin position="71"/>
        <end position="73"/>
    </location>
    <ligand>
        <name>substrate</name>
    </ligand>
</feature>
<feature type="binding site" evidence="1">
    <location>
        <position position="84"/>
    </location>
    <ligand>
        <name>substrate</name>
    </ligand>
</feature>
<feature type="binding site" evidence="1">
    <location>
        <begin position="88"/>
        <end position="90"/>
    </location>
    <ligand>
        <name>substrate</name>
    </ligand>
</feature>
<feature type="binding site" evidence="1">
    <location>
        <position position="98"/>
    </location>
    <ligand>
        <name>substrate</name>
    </ligand>
</feature>
<organism>
    <name type="scientific">Aeromonas hydrophila subsp. hydrophila (strain ATCC 7966 / DSM 30187 / BCRC 13018 / CCUG 14551 / JCM 1027 / KCTC 2358 / NCIMB 9240 / NCTC 8049)</name>
    <dbReference type="NCBI Taxonomy" id="380703"/>
    <lineage>
        <taxon>Bacteria</taxon>
        <taxon>Pseudomonadati</taxon>
        <taxon>Pseudomonadota</taxon>
        <taxon>Gammaproteobacteria</taxon>
        <taxon>Aeromonadales</taxon>
        <taxon>Aeromonadaceae</taxon>
        <taxon>Aeromonas</taxon>
    </lineage>
</organism>
<reference key="1">
    <citation type="journal article" date="2006" name="J. Bacteriol.">
        <title>Genome sequence of Aeromonas hydrophila ATCC 7966T: jack of all trades.</title>
        <authorList>
            <person name="Seshadri R."/>
            <person name="Joseph S.W."/>
            <person name="Chopra A.K."/>
            <person name="Sha J."/>
            <person name="Shaw J."/>
            <person name="Graf J."/>
            <person name="Haft D.H."/>
            <person name="Wu M."/>
            <person name="Ren Q."/>
            <person name="Rosovitz M.J."/>
            <person name="Madupu R."/>
            <person name="Tallon L."/>
            <person name="Kim M."/>
            <person name="Jin S."/>
            <person name="Vuong H."/>
            <person name="Stine O.C."/>
            <person name="Ali A."/>
            <person name="Horneman A.J."/>
            <person name="Heidelberg J.F."/>
        </authorList>
    </citation>
    <scope>NUCLEOTIDE SEQUENCE [LARGE SCALE GENOMIC DNA]</scope>
    <source>
        <strain>ATCC 7966 / DSM 30187 / BCRC 13018 / CCUG 14551 / JCM 1027 / KCTC 2358 / NCIMB 9240 / NCTC 8049</strain>
    </source>
</reference>
<sequence>MTTQIELKILDARIGTEYPLPAYATPGSAGMDLRALLDAPLTLAPGDTTLVPTGLAIHIQDPGLCATILPRSGLGHKHGIVLGNLVGLIDSDYQGQLMVSVWNRGNDNFTMQPGERIAQLVIMPVVQASFQLVDEFNQSERGEGGFGSSGRQ</sequence>
<comment type="function">
    <text evidence="1">This enzyme is involved in nucleotide metabolism: it produces dUMP, the immediate precursor of thymidine nucleotides and it decreases the intracellular concentration of dUTP so that uracil cannot be incorporated into DNA.</text>
</comment>
<comment type="catalytic activity">
    <reaction evidence="1">
        <text>dUTP + H2O = dUMP + diphosphate + H(+)</text>
        <dbReference type="Rhea" id="RHEA:10248"/>
        <dbReference type="ChEBI" id="CHEBI:15377"/>
        <dbReference type="ChEBI" id="CHEBI:15378"/>
        <dbReference type="ChEBI" id="CHEBI:33019"/>
        <dbReference type="ChEBI" id="CHEBI:61555"/>
        <dbReference type="ChEBI" id="CHEBI:246422"/>
        <dbReference type="EC" id="3.6.1.23"/>
    </reaction>
</comment>
<comment type="cofactor">
    <cofactor evidence="1">
        <name>Mg(2+)</name>
        <dbReference type="ChEBI" id="CHEBI:18420"/>
    </cofactor>
</comment>
<comment type="pathway">
    <text evidence="1">Pyrimidine metabolism; dUMP biosynthesis; dUMP from dCTP (dUTP route): step 2/2.</text>
</comment>
<comment type="similarity">
    <text evidence="1">Belongs to the dUTPase family.</text>
</comment>
<name>DUT_AERHH</name>
<accession>A0KEM6</accession>
<gene>
    <name evidence="1" type="primary">dut</name>
    <name type="ordered locus">AHA_0158</name>
</gene>
<dbReference type="EC" id="3.6.1.23" evidence="1"/>
<dbReference type="EMBL" id="CP000462">
    <property type="protein sequence ID" value="ABK39267.1"/>
    <property type="molecule type" value="Genomic_DNA"/>
</dbReference>
<dbReference type="RefSeq" id="WP_011704179.1">
    <property type="nucleotide sequence ID" value="NC_008570.1"/>
</dbReference>
<dbReference type="RefSeq" id="YP_854691.1">
    <property type="nucleotide sequence ID" value="NC_008570.1"/>
</dbReference>
<dbReference type="SMR" id="A0KEM6"/>
<dbReference type="STRING" id="380703.AHA_0158"/>
<dbReference type="EnsemblBacteria" id="ABK39267">
    <property type="protein sequence ID" value="ABK39267"/>
    <property type="gene ID" value="AHA_0158"/>
</dbReference>
<dbReference type="GeneID" id="4487421"/>
<dbReference type="KEGG" id="aha:AHA_0158"/>
<dbReference type="PATRIC" id="fig|380703.7.peg.148"/>
<dbReference type="eggNOG" id="COG0756">
    <property type="taxonomic scope" value="Bacteria"/>
</dbReference>
<dbReference type="HOGENOM" id="CLU_068508_1_1_6"/>
<dbReference type="OrthoDB" id="9809956at2"/>
<dbReference type="UniPathway" id="UPA00610">
    <property type="reaction ID" value="UER00666"/>
</dbReference>
<dbReference type="Proteomes" id="UP000000756">
    <property type="component" value="Chromosome"/>
</dbReference>
<dbReference type="GO" id="GO:0004170">
    <property type="term" value="F:dUTP diphosphatase activity"/>
    <property type="evidence" value="ECO:0007669"/>
    <property type="project" value="UniProtKB-UniRule"/>
</dbReference>
<dbReference type="GO" id="GO:0000287">
    <property type="term" value="F:magnesium ion binding"/>
    <property type="evidence" value="ECO:0007669"/>
    <property type="project" value="UniProtKB-UniRule"/>
</dbReference>
<dbReference type="GO" id="GO:0006226">
    <property type="term" value="P:dUMP biosynthetic process"/>
    <property type="evidence" value="ECO:0007669"/>
    <property type="project" value="UniProtKB-UniRule"/>
</dbReference>
<dbReference type="GO" id="GO:0046081">
    <property type="term" value="P:dUTP catabolic process"/>
    <property type="evidence" value="ECO:0007669"/>
    <property type="project" value="InterPro"/>
</dbReference>
<dbReference type="CDD" id="cd07557">
    <property type="entry name" value="trimeric_dUTPase"/>
    <property type="match status" value="1"/>
</dbReference>
<dbReference type="FunFam" id="2.70.40.10:FF:000002">
    <property type="entry name" value="dUTP diphosphatase"/>
    <property type="match status" value="1"/>
</dbReference>
<dbReference type="Gene3D" id="2.70.40.10">
    <property type="match status" value="1"/>
</dbReference>
<dbReference type="HAMAP" id="MF_00116">
    <property type="entry name" value="dUTPase_bact"/>
    <property type="match status" value="1"/>
</dbReference>
<dbReference type="InterPro" id="IPR008181">
    <property type="entry name" value="dUTPase"/>
</dbReference>
<dbReference type="InterPro" id="IPR029054">
    <property type="entry name" value="dUTPase-like"/>
</dbReference>
<dbReference type="InterPro" id="IPR036157">
    <property type="entry name" value="dUTPase-like_sf"/>
</dbReference>
<dbReference type="InterPro" id="IPR033704">
    <property type="entry name" value="dUTPase_trimeric"/>
</dbReference>
<dbReference type="NCBIfam" id="TIGR00576">
    <property type="entry name" value="dut"/>
    <property type="match status" value="1"/>
</dbReference>
<dbReference type="NCBIfam" id="NF001862">
    <property type="entry name" value="PRK00601.1"/>
    <property type="match status" value="1"/>
</dbReference>
<dbReference type="PANTHER" id="PTHR11241">
    <property type="entry name" value="DEOXYURIDINE 5'-TRIPHOSPHATE NUCLEOTIDOHYDROLASE"/>
    <property type="match status" value="1"/>
</dbReference>
<dbReference type="PANTHER" id="PTHR11241:SF0">
    <property type="entry name" value="DEOXYURIDINE 5'-TRIPHOSPHATE NUCLEOTIDOHYDROLASE"/>
    <property type="match status" value="1"/>
</dbReference>
<dbReference type="Pfam" id="PF00692">
    <property type="entry name" value="dUTPase"/>
    <property type="match status" value="1"/>
</dbReference>
<dbReference type="SUPFAM" id="SSF51283">
    <property type="entry name" value="dUTPase-like"/>
    <property type="match status" value="1"/>
</dbReference>
<proteinExistence type="inferred from homology"/>
<protein>
    <recommendedName>
        <fullName evidence="1">Deoxyuridine 5'-triphosphate nucleotidohydrolase</fullName>
        <shortName evidence="1">dUTPase</shortName>
        <ecNumber evidence="1">3.6.1.23</ecNumber>
    </recommendedName>
    <alternativeName>
        <fullName evidence="1">dUTP pyrophosphatase</fullName>
    </alternativeName>
</protein>
<keyword id="KW-0378">Hydrolase</keyword>
<keyword id="KW-0460">Magnesium</keyword>
<keyword id="KW-0479">Metal-binding</keyword>
<keyword id="KW-0546">Nucleotide metabolism</keyword>
<keyword id="KW-1185">Reference proteome</keyword>
<evidence type="ECO:0000255" key="1">
    <source>
        <dbReference type="HAMAP-Rule" id="MF_00116"/>
    </source>
</evidence>